<gene>
    <name evidence="1" type="primary">recX</name>
    <name type="ordered locus">SBO_2820</name>
</gene>
<evidence type="ECO:0000255" key="1">
    <source>
        <dbReference type="HAMAP-Rule" id="MF_01114"/>
    </source>
</evidence>
<protein>
    <recommendedName>
        <fullName evidence="1">Regulatory protein RecX</fullName>
    </recommendedName>
</protein>
<keyword id="KW-0963">Cytoplasm</keyword>
<sequence>MTESTSRRPAYARLLDRAVRILAVRDHSEQELRRKLAAPIMGKNGPEEIDATAEDYERVIAWCHEHGYLDDSRFVARFIASRSRKGYGPARIRQELNQKGISREATEKAMRECDIDWCALARDQATRKYDEPLPTVFSEKVKIQRFLLYRGYLMEDIQDIWRNFAD</sequence>
<feature type="chain" id="PRO_1000065203" description="Regulatory protein RecX">
    <location>
        <begin position="1"/>
        <end position="166"/>
    </location>
</feature>
<proteinExistence type="inferred from homology"/>
<dbReference type="EMBL" id="CP000036">
    <property type="protein sequence ID" value="ABB67345.1"/>
    <property type="molecule type" value="Genomic_DNA"/>
</dbReference>
<dbReference type="RefSeq" id="WP_000140504.1">
    <property type="nucleotide sequence ID" value="NC_007613.1"/>
</dbReference>
<dbReference type="SMR" id="Q31X63"/>
<dbReference type="KEGG" id="sbo:SBO_2820"/>
<dbReference type="HOGENOM" id="CLU_066607_3_2_6"/>
<dbReference type="Proteomes" id="UP000007067">
    <property type="component" value="Chromosome"/>
</dbReference>
<dbReference type="GO" id="GO:0005737">
    <property type="term" value="C:cytoplasm"/>
    <property type="evidence" value="ECO:0007669"/>
    <property type="project" value="UniProtKB-SubCell"/>
</dbReference>
<dbReference type="GO" id="GO:0006282">
    <property type="term" value="P:regulation of DNA repair"/>
    <property type="evidence" value="ECO:0007669"/>
    <property type="project" value="UniProtKB-UniRule"/>
</dbReference>
<dbReference type="FunFam" id="1.10.10.10:FF:000133">
    <property type="entry name" value="Regulatory protein RecX"/>
    <property type="match status" value="1"/>
</dbReference>
<dbReference type="FunFam" id="1.10.10.10:FF:000134">
    <property type="entry name" value="Regulatory protein RecX"/>
    <property type="match status" value="1"/>
</dbReference>
<dbReference type="FunFam" id="1.10.10.10:FF:000209">
    <property type="entry name" value="Regulatory protein RecX"/>
    <property type="match status" value="1"/>
</dbReference>
<dbReference type="Gene3D" id="1.10.10.10">
    <property type="entry name" value="Winged helix-like DNA-binding domain superfamily/Winged helix DNA-binding domain"/>
    <property type="match status" value="3"/>
</dbReference>
<dbReference type="HAMAP" id="MF_01114">
    <property type="entry name" value="RecX"/>
    <property type="match status" value="1"/>
</dbReference>
<dbReference type="InterPro" id="IPR053926">
    <property type="entry name" value="RecX_HTH_1st"/>
</dbReference>
<dbReference type="InterPro" id="IPR053924">
    <property type="entry name" value="RecX_HTH_2nd"/>
</dbReference>
<dbReference type="InterPro" id="IPR053925">
    <property type="entry name" value="RecX_HTH_3rd"/>
</dbReference>
<dbReference type="InterPro" id="IPR003783">
    <property type="entry name" value="Regulatory_RecX"/>
</dbReference>
<dbReference type="InterPro" id="IPR036388">
    <property type="entry name" value="WH-like_DNA-bd_sf"/>
</dbReference>
<dbReference type="NCBIfam" id="NF001052">
    <property type="entry name" value="PRK00117.1-1"/>
    <property type="match status" value="1"/>
</dbReference>
<dbReference type="PANTHER" id="PTHR33602">
    <property type="entry name" value="REGULATORY PROTEIN RECX FAMILY PROTEIN"/>
    <property type="match status" value="1"/>
</dbReference>
<dbReference type="PANTHER" id="PTHR33602:SF1">
    <property type="entry name" value="REGULATORY PROTEIN RECX FAMILY PROTEIN"/>
    <property type="match status" value="1"/>
</dbReference>
<dbReference type="Pfam" id="PF21982">
    <property type="entry name" value="RecX_HTH1"/>
    <property type="match status" value="1"/>
</dbReference>
<dbReference type="Pfam" id="PF02631">
    <property type="entry name" value="RecX_HTH2"/>
    <property type="match status" value="1"/>
</dbReference>
<dbReference type="Pfam" id="PF21981">
    <property type="entry name" value="RecX_HTH3"/>
    <property type="match status" value="1"/>
</dbReference>
<accession>Q31X63</accession>
<comment type="function">
    <text evidence="1">Modulates RecA activity.</text>
</comment>
<comment type="subcellular location">
    <subcellularLocation>
        <location evidence="1">Cytoplasm</location>
    </subcellularLocation>
</comment>
<comment type="similarity">
    <text evidence="1">Belongs to the RecX family.</text>
</comment>
<name>RECX_SHIBS</name>
<reference key="1">
    <citation type="journal article" date="2005" name="Nucleic Acids Res.">
        <title>Genome dynamics and diversity of Shigella species, the etiologic agents of bacillary dysentery.</title>
        <authorList>
            <person name="Yang F."/>
            <person name="Yang J."/>
            <person name="Zhang X."/>
            <person name="Chen L."/>
            <person name="Jiang Y."/>
            <person name="Yan Y."/>
            <person name="Tang X."/>
            <person name="Wang J."/>
            <person name="Xiong Z."/>
            <person name="Dong J."/>
            <person name="Xue Y."/>
            <person name="Zhu Y."/>
            <person name="Xu X."/>
            <person name="Sun L."/>
            <person name="Chen S."/>
            <person name="Nie H."/>
            <person name="Peng J."/>
            <person name="Xu J."/>
            <person name="Wang Y."/>
            <person name="Yuan Z."/>
            <person name="Wen Y."/>
            <person name="Yao Z."/>
            <person name="Shen Y."/>
            <person name="Qiang B."/>
            <person name="Hou Y."/>
            <person name="Yu J."/>
            <person name="Jin Q."/>
        </authorList>
    </citation>
    <scope>NUCLEOTIDE SEQUENCE [LARGE SCALE GENOMIC DNA]</scope>
    <source>
        <strain>Sb227</strain>
    </source>
</reference>
<organism>
    <name type="scientific">Shigella boydii serotype 4 (strain Sb227)</name>
    <dbReference type="NCBI Taxonomy" id="300268"/>
    <lineage>
        <taxon>Bacteria</taxon>
        <taxon>Pseudomonadati</taxon>
        <taxon>Pseudomonadota</taxon>
        <taxon>Gammaproteobacteria</taxon>
        <taxon>Enterobacterales</taxon>
        <taxon>Enterobacteriaceae</taxon>
        <taxon>Shigella</taxon>
    </lineage>
</organism>